<feature type="chain" id="PRO_0000149435" description="Adenine phosphoribosyltransferase">
    <location>
        <begin position="1"/>
        <end position="182"/>
    </location>
</feature>
<reference key="1">
    <citation type="journal article" date="2003" name="Proc. Natl. Acad. Sci. U.S.A.">
        <title>The complete genome sequence of the Arabidopsis and tomato pathogen Pseudomonas syringae pv. tomato DC3000.</title>
        <authorList>
            <person name="Buell C.R."/>
            <person name="Joardar V."/>
            <person name="Lindeberg M."/>
            <person name="Selengut J."/>
            <person name="Paulsen I.T."/>
            <person name="Gwinn M.L."/>
            <person name="Dodson R.J."/>
            <person name="DeBoy R.T."/>
            <person name="Durkin A.S."/>
            <person name="Kolonay J.F."/>
            <person name="Madupu R."/>
            <person name="Daugherty S.C."/>
            <person name="Brinkac L.M."/>
            <person name="Beanan M.J."/>
            <person name="Haft D.H."/>
            <person name="Nelson W.C."/>
            <person name="Davidsen T.M."/>
            <person name="Zafar N."/>
            <person name="Zhou L."/>
            <person name="Liu J."/>
            <person name="Yuan Q."/>
            <person name="Khouri H.M."/>
            <person name="Fedorova N.B."/>
            <person name="Tran B."/>
            <person name="Russell D."/>
            <person name="Berry K.J."/>
            <person name="Utterback T.R."/>
            <person name="Van Aken S.E."/>
            <person name="Feldblyum T.V."/>
            <person name="D'Ascenzo M."/>
            <person name="Deng W.-L."/>
            <person name="Ramos A.R."/>
            <person name="Alfano J.R."/>
            <person name="Cartinhour S."/>
            <person name="Chatterjee A.K."/>
            <person name="Delaney T.P."/>
            <person name="Lazarowitz S.G."/>
            <person name="Martin G.B."/>
            <person name="Schneider D.J."/>
            <person name="Tang X."/>
            <person name="Bender C.L."/>
            <person name="White O."/>
            <person name="Fraser C.M."/>
            <person name="Collmer A."/>
        </authorList>
    </citation>
    <scope>NUCLEOTIDE SEQUENCE [LARGE SCALE GENOMIC DNA]</scope>
    <source>
        <strain>ATCC BAA-871 / DC3000</strain>
    </source>
</reference>
<gene>
    <name evidence="1" type="primary">apt</name>
    <name type="ordered locus">PSPTO_1990</name>
</gene>
<evidence type="ECO:0000255" key="1">
    <source>
        <dbReference type="HAMAP-Rule" id="MF_00004"/>
    </source>
</evidence>
<sequence length="182" mass="20112">MTFDQSNFKSLIRPVVDFPKPGVVFRDITPLFQSPKATRQVIDSFVQRYIDADFSHIGVMDARGFLIGSVVAYQLNKPLVLFRKQGKLPADVLSEAYQTEYGEAYLEVHADSLCEGNSVIMFDDLIATGGTLIAAANLIRRMGAQVHEAAAIIDLPELGGSKRLNDLNIPTFCLTEFALDEQ</sequence>
<dbReference type="EC" id="2.4.2.7" evidence="1"/>
<dbReference type="EMBL" id="AE016853">
    <property type="protein sequence ID" value="AAO55508.1"/>
    <property type="molecule type" value="Genomic_DNA"/>
</dbReference>
<dbReference type="RefSeq" id="NP_791813.1">
    <property type="nucleotide sequence ID" value="NC_004578.1"/>
</dbReference>
<dbReference type="RefSeq" id="WP_005766964.1">
    <property type="nucleotide sequence ID" value="NC_004578.1"/>
</dbReference>
<dbReference type="SMR" id="Q884U6"/>
<dbReference type="STRING" id="223283.PSPTO_1990"/>
<dbReference type="GeneID" id="1183635"/>
<dbReference type="KEGG" id="pst:PSPTO_1990"/>
<dbReference type="PATRIC" id="fig|223283.9.peg.2019"/>
<dbReference type="eggNOG" id="COG0503">
    <property type="taxonomic scope" value="Bacteria"/>
</dbReference>
<dbReference type="HOGENOM" id="CLU_063339_3_0_6"/>
<dbReference type="OrthoDB" id="9803963at2"/>
<dbReference type="PhylomeDB" id="Q884U6"/>
<dbReference type="UniPathway" id="UPA00588">
    <property type="reaction ID" value="UER00646"/>
</dbReference>
<dbReference type="Proteomes" id="UP000002515">
    <property type="component" value="Chromosome"/>
</dbReference>
<dbReference type="GO" id="GO:0005829">
    <property type="term" value="C:cytosol"/>
    <property type="evidence" value="ECO:0007669"/>
    <property type="project" value="TreeGrafter"/>
</dbReference>
<dbReference type="GO" id="GO:0003999">
    <property type="term" value="F:adenine phosphoribosyltransferase activity"/>
    <property type="evidence" value="ECO:0007669"/>
    <property type="project" value="UniProtKB-UniRule"/>
</dbReference>
<dbReference type="GO" id="GO:0006168">
    <property type="term" value="P:adenine salvage"/>
    <property type="evidence" value="ECO:0007669"/>
    <property type="project" value="InterPro"/>
</dbReference>
<dbReference type="GO" id="GO:0044209">
    <property type="term" value="P:AMP salvage"/>
    <property type="evidence" value="ECO:0007669"/>
    <property type="project" value="UniProtKB-UniRule"/>
</dbReference>
<dbReference type="GO" id="GO:0006166">
    <property type="term" value="P:purine ribonucleoside salvage"/>
    <property type="evidence" value="ECO:0007669"/>
    <property type="project" value="UniProtKB-KW"/>
</dbReference>
<dbReference type="CDD" id="cd06223">
    <property type="entry name" value="PRTases_typeI"/>
    <property type="match status" value="1"/>
</dbReference>
<dbReference type="FunFam" id="3.40.50.2020:FF:000021">
    <property type="entry name" value="Adenine phosphoribosyltransferase"/>
    <property type="match status" value="1"/>
</dbReference>
<dbReference type="Gene3D" id="3.40.50.2020">
    <property type="match status" value="1"/>
</dbReference>
<dbReference type="HAMAP" id="MF_00004">
    <property type="entry name" value="Aden_phosphoribosyltr"/>
    <property type="match status" value="1"/>
</dbReference>
<dbReference type="InterPro" id="IPR005764">
    <property type="entry name" value="Ade_phspho_trans"/>
</dbReference>
<dbReference type="InterPro" id="IPR050120">
    <property type="entry name" value="Adenine_PRTase"/>
</dbReference>
<dbReference type="InterPro" id="IPR000836">
    <property type="entry name" value="PRibTrfase_dom"/>
</dbReference>
<dbReference type="InterPro" id="IPR029057">
    <property type="entry name" value="PRTase-like"/>
</dbReference>
<dbReference type="NCBIfam" id="TIGR01090">
    <property type="entry name" value="apt"/>
    <property type="match status" value="1"/>
</dbReference>
<dbReference type="NCBIfam" id="NF002634">
    <property type="entry name" value="PRK02304.1-3"/>
    <property type="match status" value="1"/>
</dbReference>
<dbReference type="NCBIfam" id="NF002636">
    <property type="entry name" value="PRK02304.1-5"/>
    <property type="match status" value="1"/>
</dbReference>
<dbReference type="PANTHER" id="PTHR11776">
    <property type="entry name" value="ADENINE PHOSPHORIBOSYLTRANSFERASE"/>
    <property type="match status" value="1"/>
</dbReference>
<dbReference type="PANTHER" id="PTHR11776:SF7">
    <property type="entry name" value="PHOSPHORIBOSYLTRANSFERASE DOMAIN-CONTAINING PROTEIN"/>
    <property type="match status" value="1"/>
</dbReference>
<dbReference type="Pfam" id="PF00156">
    <property type="entry name" value="Pribosyltran"/>
    <property type="match status" value="1"/>
</dbReference>
<dbReference type="SUPFAM" id="SSF53271">
    <property type="entry name" value="PRTase-like"/>
    <property type="match status" value="1"/>
</dbReference>
<dbReference type="PROSITE" id="PS00103">
    <property type="entry name" value="PUR_PYR_PR_TRANSFER"/>
    <property type="match status" value="1"/>
</dbReference>
<organism>
    <name type="scientific">Pseudomonas syringae pv. tomato (strain ATCC BAA-871 / DC3000)</name>
    <dbReference type="NCBI Taxonomy" id="223283"/>
    <lineage>
        <taxon>Bacteria</taxon>
        <taxon>Pseudomonadati</taxon>
        <taxon>Pseudomonadota</taxon>
        <taxon>Gammaproteobacteria</taxon>
        <taxon>Pseudomonadales</taxon>
        <taxon>Pseudomonadaceae</taxon>
        <taxon>Pseudomonas</taxon>
    </lineage>
</organism>
<accession>Q884U6</accession>
<keyword id="KW-0963">Cytoplasm</keyword>
<keyword id="KW-0328">Glycosyltransferase</keyword>
<keyword id="KW-0660">Purine salvage</keyword>
<keyword id="KW-1185">Reference proteome</keyword>
<keyword id="KW-0808">Transferase</keyword>
<name>APT_PSESM</name>
<proteinExistence type="inferred from homology"/>
<protein>
    <recommendedName>
        <fullName evidence="1">Adenine phosphoribosyltransferase</fullName>
        <shortName evidence="1">APRT</shortName>
        <ecNumber evidence="1">2.4.2.7</ecNumber>
    </recommendedName>
</protein>
<comment type="function">
    <text evidence="1">Catalyzes a salvage reaction resulting in the formation of AMP, that is energically less costly than de novo synthesis.</text>
</comment>
<comment type="catalytic activity">
    <reaction evidence="1">
        <text>AMP + diphosphate = 5-phospho-alpha-D-ribose 1-diphosphate + adenine</text>
        <dbReference type="Rhea" id="RHEA:16609"/>
        <dbReference type="ChEBI" id="CHEBI:16708"/>
        <dbReference type="ChEBI" id="CHEBI:33019"/>
        <dbReference type="ChEBI" id="CHEBI:58017"/>
        <dbReference type="ChEBI" id="CHEBI:456215"/>
        <dbReference type="EC" id="2.4.2.7"/>
    </reaction>
</comment>
<comment type="pathway">
    <text evidence="1">Purine metabolism; AMP biosynthesis via salvage pathway; AMP from adenine: step 1/1.</text>
</comment>
<comment type="subunit">
    <text evidence="1">Homodimer.</text>
</comment>
<comment type="subcellular location">
    <subcellularLocation>
        <location evidence="1">Cytoplasm</location>
    </subcellularLocation>
</comment>
<comment type="similarity">
    <text evidence="1">Belongs to the purine/pyrimidine phosphoribosyltransferase family.</text>
</comment>